<proteinExistence type="inferred from homology"/>
<feature type="chain" id="PRO_0000278949" description="rRNA-processing protein CGR1">
    <location>
        <begin position="1"/>
        <end position="135"/>
    </location>
</feature>
<feature type="region of interest" description="Disordered" evidence="3">
    <location>
        <begin position="1"/>
        <end position="33"/>
    </location>
</feature>
<feature type="region of interest" description="Disordered" evidence="3">
    <location>
        <begin position="110"/>
        <end position="135"/>
    </location>
</feature>
<feature type="coiled-coil region" evidence="2">
    <location>
        <begin position="60"/>
        <end position="118"/>
    </location>
</feature>
<feature type="compositionally biased region" description="Basic and acidic residues" evidence="3">
    <location>
        <begin position="11"/>
        <end position="33"/>
    </location>
</feature>
<feature type="compositionally biased region" description="Basic residues" evidence="3">
    <location>
        <begin position="112"/>
        <end position="128"/>
    </location>
</feature>
<gene>
    <name type="primary">CGR1</name>
    <name type="ordered locus">CAALFM_C111000CA</name>
    <name type="ORF">CaO19.2314</name>
    <name type="ORF">CaO19.9850</name>
</gene>
<comment type="function">
    <text evidence="1">Involved in nucleolar integrity and required for processing of the pre-rRNA for the 60S ribosome subunit.</text>
</comment>
<comment type="subcellular location">
    <subcellularLocation>
        <location evidence="1">Nucleus</location>
        <location evidence="1">Nucleolus</location>
    </subcellularLocation>
</comment>
<comment type="similarity">
    <text evidence="4">Belongs to the CGR1 family.</text>
</comment>
<dbReference type="EMBL" id="CP017623">
    <property type="protein sequence ID" value="AOW26726.1"/>
    <property type="molecule type" value="Genomic_DNA"/>
</dbReference>
<dbReference type="RefSeq" id="XP_713919.1">
    <property type="nucleotide sequence ID" value="XM_708826.1"/>
</dbReference>
<dbReference type="SMR" id="Q59WI7"/>
<dbReference type="FunCoup" id="Q59WI7">
    <property type="interactions" value="157"/>
</dbReference>
<dbReference type="STRING" id="237561.Q59WI7"/>
<dbReference type="EnsemblFungi" id="C1_11000C_A-T">
    <property type="protein sequence ID" value="C1_11000C_A-T-p1"/>
    <property type="gene ID" value="C1_11000C_A"/>
</dbReference>
<dbReference type="GeneID" id="3644422"/>
<dbReference type="KEGG" id="cal:CAALFM_C111000CA"/>
<dbReference type="CGD" id="CAL0000173953">
    <property type="gene designation" value="orf19.9850"/>
</dbReference>
<dbReference type="VEuPathDB" id="FungiDB:C1_11000C_A"/>
<dbReference type="eggNOG" id="ENOG502S7VB">
    <property type="taxonomic scope" value="Eukaryota"/>
</dbReference>
<dbReference type="HOGENOM" id="CLU_125051_0_1_1"/>
<dbReference type="InParanoid" id="Q59WI7"/>
<dbReference type="OMA" id="NGKQWHD"/>
<dbReference type="OrthoDB" id="3942380at2759"/>
<dbReference type="PRO" id="PR:Q59WI7"/>
<dbReference type="Proteomes" id="UP000000559">
    <property type="component" value="Chromosome 1"/>
</dbReference>
<dbReference type="GO" id="GO:0005730">
    <property type="term" value="C:nucleolus"/>
    <property type="evidence" value="ECO:0007669"/>
    <property type="project" value="UniProtKB-SubCell"/>
</dbReference>
<dbReference type="GO" id="GO:0006364">
    <property type="term" value="P:rRNA processing"/>
    <property type="evidence" value="ECO:0007669"/>
    <property type="project" value="UniProtKB-KW"/>
</dbReference>
<dbReference type="InterPro" id="IPR005579">
    <property type="entry name" value="Cgr1-like"/>
</dbReference>
<dbReference type="Pfam" id="PF03879">
    <property type="entry name" value="Cgr1"/>
    <property type="match status" value="1"/>
</dbReference>
<reference key="1">
    <citation type="journal article" date="2004" name="Proc. Natl. Acad. Sci. U.S.A.">
        <title>The diploid genome sequence of Candida albicans.</title>
        <authorList>
            <person name="Jones T."/>
            <person name="Federspiel N.A."/>
            <person name="Chibana H."/>
            <person name="Dungan J."/>
            <person name="Kalman S."/>
            <person name="Magee B.B."/>
            <person name="Newport G."/>
            <person name="Thorstenson Y.R."/>
            <person name="Agabian N."/>
            <person name="Magee P.T."/>
            <person name="Davis R.W."/>
            <person name="Scherer S."/>
        </authorList>
    </citation>
    <scope>NUCLEOTIDE SEQUENCE [LARGE SCALE GENOMIC DNA]</scope>
    <source>
        <strain>SC5314 / ATCC MYA-2876</strain>
    </source>
</reference>
<reference key="2">
    <citation type="journal article" date="2007" name="Genome Biol.">
        <title>Assembly of the Candida albicans genome into sixteen supercontigs aligned on the eight chromosomes.</title>
        <authorList>
            <person name="van het Hoog M."/>
            <person name="Rast T.J."/>
            <person name="Martchenko M."/>
            <person name="Grindle S."/>
            <person name="Dignard D."/>
            <person name="Hogues H."/>
            <person name="Cuomo C."/>
            <person name="Berriman M."/>
            <person name="Scherer S."/>
            <person name="Magee B.B."/>
            <person name="Whiteway M."/>
            <person name="Chibana H."/>
            <person name="Nantel A."/>
            <person name="Magee P.T."/>
        </authorList>
    </citation>
    <scope>GENOME REANNOTATION</scope>
    <source>
        <strain>SC5314 / ATCC MYA-2876</strain>
    </source>
</reference>
<reference key="3">
    <citation type="journal article" date="2013" name="Genome Biol.">
        <title>Assembly of a phased diploid Candida albicans genome facilitates allele-specific measurements and provides a simple model for repeat and indel structure.</title>
        <authorList>
            <person name="Muzzey D."/>
            <person name="Schwartz K."/>
            <person name="Weissman J.S."/>
            <person name="Sherlock G."/>
        </authorList>
    </citation>
    <scope>NUCLEOTIDE SEQUENCE [LARGE SCALE GENOMIC DNA]</scope>
    <scope>GENOME REANNOTATION</scope>
    <source>
        <strain>SC5314 / ATCC MYA-2876</strain>
    </source>
</reference>
<accession>Q59WI7</accession>
<accession>A0A1D8PF07</accession>
<evidence type="ECO:0000250" key="1"/>
<evidence type="ECO:0000255" key="2"/>
<evidence type="ECO:0000256" key="3">
    <source>
        <dbReference type="SAM" id="MobiDB-lite"/>
    </source>
</evidence>
<evidence type="ECO:0000305" key="4"/>
<protein>
    <recommendedName>
        <fullName>rRNA-processing protein CGR1</fullName>
    </recommendedName>
</protein>
<organism>
    <name type="scientific">Candida albicans (strain SC5314 / ATCC MYA-2876)</name>
    <name type="common">Yeast</name>
    <dbReference type="NCBI Taxonomy" id="237561"/>
    <lineage>
        <taxon>Eukaryota</taxon>
        <taxon>Fungi</taxon>
        <taxon>Dikarya</taxon>
        <taxon>Ascomycota</taxon>
        <taxon>Saccharomycotina</taxon>
        <taxon>Pichiomycetes</taxon>
        <taxon>Debaryomycetaceae</taxon>
        <taxon>Candida/Lodderomyces clade</taxon>
        <taxon>Candida</taxon>
    </lineage>
</organism>
<sequence>MSSSSNLQYEEIPKKYIDPLAPKDKGEGSRVNGKDWKIKKDAFRVKTLGVVSKTKKDSFKQRELKRLEEEQYKARLKELKDEKESAKNQRIADLKRRREIKAEKERYERMATKMHAKKVERMRKREKRNKLLKER</sequence>
<keyword id="KW-0175">Coiled coil</keyword>
<keyword id="KW-0539">Nucleus</keyword>
<keyword id="KW-1185">Reference proteome</keyword>
<keyword id="KW-0690">Ribosome biogenesis</keyword>
<keyword id="KW-0698">rRNA processing</keyword>
<name>CGR1_CANAL</name>